<gene>
    <name evidence="1" type="primary">rbfA</name>
</gene>
<reference key="1">
    <citation type="submission" date="1998-04" db="EMBL/GenBank/DDBJ databases">
        <title>Sequence of infB from Lactococcus lactis.</title>
        <authorList>
            <person name="Adolf K."/>
            <person name="Fink T."/>
            <person name="Hansen J.J."/>
            <person name="Mortensen K.K."/>
            <person name="Sperling-Petersen H.U."/>
        </authorList>
    </citation>
    <scope>NUCLEOTIDE SEQUENCE [GENOMIC DNA]</scope>
    <source>
        <strain>W34</strain>
    </source>
</reference>
<proteinExistence type="inferred from homology"/>
<protein>
    <recommendedName>
        <fullName evidence="1">Ribosome-binding factor A</fullName>
    </recommendedName>
</protein>
<comment type="function">
    <text evidence="1">One of several proteins that assist in the late maturation steps of the functional core of the 30S ribosomal subunit. Associates with free 30S ribosomal subunits (but not with 30S subunits that are part of 70S ribosomes or polysomes). Required for efficient processing of 16S rRNA. May interact with the 5'-terminal helix region of 16S rRNA.</text>
</comment>
<comment type="subunit">
    <text evidence="1">Monomer. Binds 30S ribosomal subunits, but not 50S ribosomal subunits or 70S ribosomes.</text>
</comment>
<comment type="subcellular location">
    <subcellularLocation>
        <location evidence="1">Cytoplasm</location>
    </subcellularLocation>
</comment>
<comment type="similarity">
    <text evidence="1">Belongs to the RbfA family.</text>
</comment>
<dbReference type="EMBL" id="AJ005118">
    <property type="protein sequence ID" value="CAB40558.1"/>
    <property type="molecule type" value="Genomic_DNA"/>
</dbReference>
<dbReference type="SMR" id="Q9X765"/>
<dbReference type="GO" id="GO:0005829">
    <property type="term" value="C:cytosol"/>
    <property type="evidence" value="ECO:0007669"/>
    <property type="project" value="TreeGrafter"/>
</dbReference>
<dbReference type="GO" id="GO:0043024">
    <property type="term" value="F:ribosomal small subunit binding"/>
    <property type="evidence" value="ECO:0007669"/>
    <property type="project" value="TreeGrafter"/>
</dbReference>
<dbReference type="GO" id="GO:0030490">
    <property type="term" value="P:maturation of SSU-rRNA"/>
    <property type="evidence" value="ECO:0007669"/>
    <property type="project" value="UniProtKB-UniRule"/>
</dbReference>
<dbReference type="Gene3D" id="3.30.300.20">
    <property type="match status" value="1"/>
</dbReference>
<dbReference type="HAMAP" id="MF_00003">
    <property type="entry name" value="RbfA"/>
    <property type="match status" value="1"/>
</dbReference>
<dbReference type="InterPro" id="IPR015946">
    <property type="entry name" value="KH_dom-like_a/b"/>
</dbReference>
<dbReference type="InterPro" id="IPR000238">
    <property type="entry name" value="RbfA"/>
</dbReference>
<dbReference type="InterPro" id="IPR023799">
    <property type="entry name" value="RbfA_dom_sf"/>
</dbReference>
<dbReference type="InterPro" id="IPR020053">
    <property type="entry name" value="Ribosome-bd_factorA_CS"/>
</dbReference>
<dbReference type="NCBIfam" id="TIGR00082">
    <property type="entry name" value="rbfA"/>
    <property type="match status" value="1"/>
</dbReference>
<dbReference type="PANTHER" id="PTHR33515">
    <property type="entry name" value="RIBOSOME-BINDING FACTOR A, CHLOROPLASTIC-RELATED"/>
    <property type="match status" value="1"/>
</dbReference>
<dbReference type="PANTHER" id="PTHR33515:SF1">
    <property type="entry name" value="RIBOSOME-BINDING FACTOR A, CHLOROPLASTIC-RELATED"/>
    <property type="match status" value="1"/>
</dbReference>
<dbReference type="Pfam" id="PF02033">
    <property type="entry name" value="RBFA"/>
    <property type="match status" value="1"/>
</dbReference>
<dbReference type="SUPFAM" id="SSF89919">
    <property type="entry name" value="Ribosome-binding factor A, RbfA"/>
    <property type="match status" value="1"/>
</dbReference>
<dbReference type="PROSITE" id="PS01319">
    <property type="entry name" value="RBFA"/>
    <property type="match status" value="1"/>
</dbReference>
<sequence length="113" mass="12712">MGNSFRSDRVAVEIQREINDILRNKVRDPRVQDVNITDVQLTGDLSQATVYYSLLSNLASDNEKAATALKKATGLFKSELAKRMTIFKIPDLTFAKDESVEYGSKIDEILTWA</sequence>
<accession>Q9X765</accession>
<name>RBFA_LACLC</name>
<keyword id="KW-0963">Cytoplasm</keyword>
<keyword id="KW-0690">Ribosome biogenesis</keyword>
<feature type="chain" id="PRO_0000102678" description="Ribosome-binding factor A">
    <location>
        <begin position="1"/>
        <end position="113"/>
    </location>
</feature>
<organism>
    <name type="scientific">Lactococcus lactis subsp. cremoris</name>
    <name type="common">Streptococcus cremoris</name>
    <dbReference type="NCBI Taxonomy" id="1359"/>
    <lineage>
        <taxon>Bacteria</taxon>
        <taxon>Bacillati</taxon>
        <taxon>Bacillota</taxon>
        <taxon>Bacilli</taxon>
        <taxon>Lactobacillales</taxon>
        <taxon>Streptococcaceae</taxon>
        <taxon>Lactococcus</taxon>
    </lineage>
</organism>
<evidence type="ECO:0000255" key="1">
    <source>
        <dbReference type="HAMAP-Rule" id="MF_00003"/>
    </source>
</evidence>